<sequence length="184" mass="20375">MLNDIKNNAQTRMAKSIDALKHTLTSIRTGRATPALLDRVTVNAYGNASTPLNQVASISNADAHSLLVTPFDKGMIKEIEKGLYNAEFTPNTLGTAIRINMPPPTEERRKELVKQVQKEGEGAKIAIRNIRQDANKEIAKLVKDKAISEDEKKRGEDDIQKLTDTNIKDVDKVVADKEKELLSV</sequence>
<accession>B2FIA5</accession>
<feature type="chain" id="PRO_1000090790" description="Ribosome-recycling factor">
    <location>
        <begin position="1"/>
        <end position="184"/>
    </location>
</feature>
<gene>
    <name evidence="1" type="primary">frr</name>
    <name type="ordered locus">Smlt1503</name>
</gene>
<name>RRF_STRMK</name>
<reference key="1">
    <citation type="journal article" date="2008" name="Genome Biol.">
        <title>The complete genome, comparative and functional analysis of Stenotrophomonas maltophilia reveals an organism heavily shielded by drug resistance determinants.</title>
        <authorList>
            <person name="Crossman L.C."/>
            <person name="Gould V.C."/>
            <person name="Dow J.M."/>
            <person name="Vernikos G.S."/>
            <person name="Okazaki A."/>
            <person name="Sebaihia M."/>
            <person name="Saunders D."/>
            <person name="Arrowsmith C."/>
            <person name="Carver T."/>
            <person name="Peters N."/>
            <person name="Adlem E."/>
            <person name="Kerhornou A."/>
            <person name="Lord A."/>
            <person name="Murphy L."/>
            <person name="Seeger K."/>
            <person name="Squares R."/>
            <person name="Rutter S."/>
            <person name="Quail M.A."/>
            <person name="Rajandream M.A."/>
            <person name="Harris D."/>
            <person name="Churcher C."/>
            <person name="Bentley S.D."/>
            <person name="Parkhill J."/>
            <person name="Thomson N.R."/>
            <person name="Avison M.B."/>
        </authorList>
    </citation>
    <scope>NUCLEOTIDE SEQUENCE [LARGE SCALE GENOMIC DNA]</scope>
    <source>
        <strain>K279a</strain>
    </source>
</reference>
<comment type="function">
    <text evidence="1">Responsible for the release of ribosomes from messenger RNA at the termination of protein biosynthesis. May increase the efficiency of translation by recycling ribosomes from one round of translation to another.</text>
</comment>
<comment type="subcellular location">
    <subcellularLocation>
        <location evidence="1">Cytoplasm</location>
    </subcellularLocation>
</comment>
<comment type="similarity">
    <text evidence="1">Belongs to the RRF family.</text>
</comment>
<protein>
    <recommendedName>
        <fullName evidence="1">Ribosome-recycling factor</fullName>
        <shortName evidence="1">RRF</shortName>
    </recommendedName>
    <alternativeName>
        <fullName evidence="1">Ribosome-releasing factor</fullName>
    </alternativeName>
</protein>
<organism>
    <name type="scientific">Stenotrophomonas maltophilia (strain K279a)</name>
    <dbReference type="NCBI Taxonomy" id="522373"/>
    <lineage>
        <taxon>Bacteria</taxon>
        <taxon>Pseudomonadati</taxon>
        <taxon>Pseudomonadota</taxon>
        <taxon>Gammaproteobacteria</taxon>
        <taxon>Lysobacterales</taxon>
        <taxon>Lysobacteraceae</taxon>
        <taxon>Stenotrophomonas</taxon>
        <taxon>Stenotrophomonas maltophilia group</taxon>
    </lineage>
</organism>
<proteinExistence type="inferred from homology"/>
<evidence type="ECO:0000255" key="1">
    <source>
        <dbReference type="HAMAP-Rule" id="MF_00040"/>
    </source>
</evidence>
<keyword id="KW-0963">Cytoplasm</keyword>
<keyword id="KW-0648">Protein biosynthesis</keyword>
<keyword id="KW-1185">Reference proteome</keyword>
<dbReference type="EMBL" id="AM743169">
    <property type="protein sequence ID" value="CAQ45039.1"/>
    <property type="molecule type" value="Genomic_DNA"/>
</dbReference>
<dbReference type="RefSeq" id="WP_005408744.1">
    <property type="nucleotide sequence ID" value="NC_010943.1"/>
</dbReference>
<dbReference type="SMR" id="B2FIA5"/>
<dbReference type="EnsemblBacteria" id="CAQ45039">
    <property type="protein sequence ID" value="CAQ45039"/>
    <property type="gene ID" value="Smlt1503"/>
</dbReference>
<dbReference type="GeneID" id="93832681"/>
<dbReference type="KEGG" id="sml:Smlt1503"/>
<dbReference type="eggNOG" id="COG0233">
    <property type="taxonomic scope" value="Bacteria"/>
</dbReference>
<dbReference type="HOGENOM" id="CLU_073981_2_0_6"/>
<dbReference type="Proteomes" id="UP000008840">
    <property type="component" value="Chromosome"/>
</dbReference>
<dbReference type="GO" id="GO:0005829">
    <property type="term" value="C:cytosol"/>
    <property type="evidence" value="ECO:0007669"/>
    <property type="project" value="GOC"/>
</dbReference>
<dbReference type="GO" id="GO:0043023">
    <property type="term" value="F:ribosomal large subunit binding"/>
    <property type="evidence" value="ECO:0007669"/>
    <property type="project" value="TreeGrafter"/>
</dbReference>
<dbReference type="GO" id="GO:0002184">
    <property type="term" value="P:cytoplasmic translational termination"/>
    <property type="evidence" value="ECO:0007669"/>
    <property type="project" value="TreeGrafter"/>
</dbReference>
<dbReference type="CDD" id="cd00520">
    <property type="entry name" value="RRF"/>
    <property type="match status" value="1"/>
</dbReference>
<dbReference type="FunFam" id="1.10.132.20:FF:000001">
    <property type="entry name" value="Ribosome-recycling factor"/>
    <property type="match status" value="1"/>
</dbReference>
<dbReference type="FunFam" id="3.30.1360.40:FF:000001">
    <property type="entry name" value="Ribosome-recycling factor"/>
    <property type="match status" value="1"/>
</dbReference>
<dbReference type="Gene3D" id="3.30.1360.40">
    <property type="match status" value="1"/>
</dbReference>
<dbReference type="Gene3D" id="1.10.132.20">
    <property type="entry name" value="Ribosome-recycling factor"/>
    <property type="match status" value="2"/>
</dbReference>
<dbReference type="HAMAP" id="MF_00040">
    <property type="entry name" value="RRF"/>
    <property type="match status" value="1"/>
</dbReference>
<dbReference type="InterPro" id="IPR002661">
    <property type="entry name" value="Ribosome_recyc_fac"/>
</dbReference>
<dbReference type="InterPro" id="IPR023584">
    <property type="entry name" value="Ribosome_recyc_fac_dom"/>
</dbReference>
<dbReference type="InterPro" id="IPR036191">
    <property type="entry name" value="RRF_sf"/>
</dbReference>
<dbReference type="NCBIfam" id="TIGR00496">
    <property type="entry name" value="frr"/>
    <property type="match status" value="1"/>
</dbReference>
<dbReference type="PANTHER" id="PTHR20982:SF3">
    <property type="entry name" value="MITOCHONDRIAL RIBOSOME RECYCLING FACTOR PSEUDO 1"/>
    <property type="match status" value="1"/>
</dbReference>
<dbReference type="PANTHER" id="PTHR20982">
    <property type="entry name" value="RIBOSOME RECYCLING FACTOR"/>
    <property type="match status" value="1"/>
</dbReference>
<dbReference type="Pfam" id="PF01765">
    <property type="entry name" value="RRF"/>
    <property type="match status" value="1"/>
</dbReference>
<dbReference type="SUPFAM" id="SSF55194">
    <property type="entry name" value="Ribosome recycling factor, RRF"/>
    <property type="match status" value="1"/>
</dbReference>